<protein>
    <recommendedName>
        <fullName evidence="1">Uracil phosphoribosyltransferase</fullName>
        <ecNumber evidence="1">2.4.2.9</ecNumber>
    </recommendedName>
    <alternativeName>
        <fullName evidence="1">UMP pyrophosphorylase</fullName>
    </alternativeName>
    <alternativeName>
        <fullName evidence="1">UPRTase</fullName>
    </alternativeName>
</protein>
<gene>
    <name evidence="1" type="primary">upp</name>
    <name type="ordered locus">SeSA_A2735</name>
</gene>
<proteinExistence type="inferred from homology"/>
<reference key="1">
    <citation type="journal article" date="2011" name="J. Bacteriol.">
        <title>Comparative genomics of 28 Salmonella enterica isolates: evidence for CRISPR-mediated adaptive sublineage evolution.</title>
        <authorList>
            <person name="Fricke W.F."/>
            <person name="Mammel M.K."/>
            <person name="McDermott P.F."/>
            <person name="Tartera C."/>
            <person name="White D.G."/>
            <person name="Leclerc J.E."/>
            <person name="Ravel J."/>
            <person name="Cebula T.A."/>
        </authorList>
    </citation>
    <scope>NUCLEOTIDE SEQUENCE [LARGE SCALE GENOMIC DNA]</scope>
    <source>
        <strain>CVM19633</strain>
    </source>
</reference>
<organism>
    <name type="scientific">Salmonella schwarzengrund (strain CVM19633)</name>
    <dbReference type="NCBI Taxonomy" id="439843"/>
    <lineage>
        <taxon>Bacteria</taxon>
        <taxon>Pseudomonadati</taxon>
        <taxon>Pseudomonadota</taxon>
        <taxon>Gammaproteobacteria</taxon>
        <taxon>Enterobacterales</taxon>
        <taxon>Enterobacteriaceae</taxon>
        <taxon>Salmonella</taxon>
    </lineage>
</organism>
<keyword id="KW-0021">Allosteric enzyme</keyword>
<keyword id="KW-0328">Glycosyltransferase</keyword>
<keyword id="KW-0342">GTP-binding</keyword>
<keyword id="KW-0460">Magnesium</keyword>
<keyword id="KW-0547">Nucleotide-binding</keyword>
<keyword id="KW-0808">Transferase</keyword>
<accession>B4TR74</accession>
<sequence length="208" mass="22533">MKIVEVKHPLVKHKLGLMRENDISTKRFRELASEVGSLLTYEATADLETEKVTIEGWNGPVEIDQIKGKKITVVPILRAGLGMMEGVLENVPSARISVVGMYRNEETLEPVPYFQKLVSNIDERMALIVDPMLATGGSVIATIDLLKKAGCSSIKVLVLVAAPEGIAALEKAHPDVELYTASIDQGLNEHGYIIPGLGDAGDKIFGTK</sequence>
<name>UPP_SALSV</name>
<comment type="function">
    <text evidence="1">Catalyzes the conversion of uracil and 5-phospho-alpha-D-ribose 1-diphosphate (PRPP) to UMP and diphosphate.</text>
</comment>
<comment type="catalytic activity">
    <reaction evidence="1">
        <text>UMP + diphosphate = 5-phospho-alpha-D-ribose 1-diphosphate + uracil</text>
        <dbReference type="Rhea" id="RHEA:13017"/>
        <dbReference type="ChEBI" id="CHEBI:17568"/>
        <dbReference type="ChEBI" id="CHEBI:33019"/>
        <dbReference type="ChEBI" id="CHEBI:57865"/>
        <dbReference type="ChEBI" id="CHEBI:58017"/>
        <dbReference type="EC" id="2.4.2.9"/>
    </reaction>
</comment>
<comment type="cofactor">
    <cofactor evidence="1">
        <name>Mg(2+)</name>
        <dbReference type="ChEBI" id="CHEBI:18420"/>
    </cofactor>
    <text evidence="1">Binds 1 Mg(2+) ion per subunit. The magnesium is bound as Mg-PRPP.</text>
</comment>
<comment type="activity regulation">
    <text evidence="1">Allosterically activated by GTP.</text>
</comment>
<comment type="pathway">
    <text evidence="1">Pyrimidine metabolism; UMP biosynthesis via salvage pathway; UMP from uracil: step 1/1.</text>
</comment>
<comment type="similarity">
    <text evidence="1">Belongs to the UPRTase family.</text>
</comment>
<evidence type="ECO:0000255" key="1">
    <source>
        <dbReference type="HAMAP-Rule" id="MF_01218"/>
    </source>
</evidence>
<dbReference type="EC" id="2.4.2.9" evidence="1"/>
<dbReference type="EMBL" id="CP001127">
    <property type="protein sequence ID" value="ACF89615.1"/>
    <property type="molecule type" value="Genomic_DNA"/>
</dbReference>
<dbReference type="RefSeq" id="WP_000706208.1">
    <property type="nucleotide sequence ID" value="NC_011094.1"/>
</dbReference>
<dbReference type="SMR" id="B4TR74"/>
<dbReference type="KEGG" id="sew:SeSA_A2735"/>
<dbReference type="HOGENOM" id="CLU_067096_2_2_6"/>
<dbReference type="UniPathway" id="UPA00574">
    <property type="reaction ID" value="UER00636"/>
</dbReference>
<dbReference type="Proteomes" id="UP000001865">
    <property type="component" value="Chromosome"/>
</dbReference>
<dbReference type="GO" id="GO:0005525">
    <property type="term" value="F:GTP binding"/>
    <property type="evidence" value="ECO:0007669"/>
    <property type="project" value="UniProtKB-KW"/>
</dbReference>
<dbReference type="GO" id="GO:0000287">
    <property type="term" value="F:magnesium ion binding"/>
    <property type="evidence" value="ECO:0007669"/>
    <property type="project" value="UniProtKB-UniRule"/>
</dbReference>
<dbReference type="GO" id="GO:0004845">
    <property type="term" value="F:uracil phosphoribosyltransferase activity"/>
    <property type="evidence" value="ECO:0007669"/>
    <property type="project" value="UniProtKB-UniRule"/>
</dbReference>
<dbReference type="GO" id="GO:0044206">
    <property type="term" value="P:UMP salvage"/>
    <property type="evidence" value="ECO:0007669"/>
    <property type="project" value="UniProtKB-UniRule"/>
</dbReference>
<dbReference type="GO" id="GO:0006223">
    <property type="term" value="P:uracil salvage"/>
    <property type="evidence" value="ECO:0007669"/>
    <property type="project" value="InterPro"/>
</dbReference>
<dbReference type="CDD" id="cd06223">
    <property type="entry name" value="PRTases_typeI"/>
    <property type="match status" value="1"/>
</dbReference>
<dbReference type="FunFam" id="3.40.50.2020:FF:000003">
    <property type="entry name" value="Uracil phosphoribosyltransferase"/>
    <property type="match status" value="1"/>
</dbReference>
<dbReference type="Gene3D" id="3.40.50.2020">
    <property type="match status" value="1"/>
</dbReference>
<dbReference type="HAMAP" id="MF_01218_B">
    <property type="entry name" value="Upp_B"/>
    <property type="match status" value="1"/>
</dbReference>
<dbReference type="InterPro" id="IPR000836">
    <property type="entry name" value="PRibTrfase_dom"/>
</dbReference>
<dbReference type="InterPro" id="IPR029057">
    <property type="entry name" value="PRTase-like"/>
</dbReference>
<dbReference type="InterPro" id="IPR034332">
    <property type="entry name" value="Upp_B"/>
</dbReference>
<dbReference type="InterPro" id="IPR050054">
    <property type="entry name" value="UPRTase/APRTase"/>
</dbReference>
<dbReference type="InterPro" id="IPR005765">
    <property type="entry name" value="Ura_phspho_trans"/>
</dbReference>
<dbReference type="NCBIfam" id="NF001097">
    <property type="entry name" value="PRK00129.1"/>
    <property type="match status" value="1"/>
</dbReference>
<dbReference type="NCBIfam" id="TIGR01091">
    <property type="entry name" value="upp"/>
    <property type="match status" value="1"/>
</dbReference>
<dbReference type="PANTHER" id="PTHR32315">
    <property type="entry name" value="ADENINE PHOSPHORIBOSYLTRANSFERASE"/>
    <property type="match status" value="1"/>
</dbReference>
<dbReference type="PANTHER" id="PTHR32315:SF4">
    <property type="entry name" value="URACIL PHOSPHORIBOSYLTRANSFERASE, CHLOROPLASTIC"/>
    <property type="match status" value="1"/>
</dbReference>
<dbReference type="Pfam" id="PF14681">
    <property type="entry name" value="UPRTase"/>
    <property type="match status" value="1"/>
</dbReference>
<dbReference type="SUPFAM" id="SSF53271">
    <property type="entry name" value="PRTase-like"/>
    <property type="match status" value="1"/>
</dbReference>
<feature type="chain" id="PRO_1000139161" description="Uracil phosphoribosyltransferase">
    <location>
        <begin position="1"/>
        <end position="208"/>
    </location>
</feature>
<feature type="binding site" evidence="1">
    <location>
        <position position="78"/>
    </location>
    <ligand>
        <name>5-phospho-alpha-D-ribose 1-diphosphate</name>
        <dbReference type="ChEBI" id="CHEBI:58017"/>
    </ligand>
</feature>
<feature type="binding site" evidence="1">
    <location>
        <position position="103"/>
    </location>
    <ligand>
        <name>5-phospho-alpha-D-ribose 1-diphosphate</name>
        <dbReference type="ChEBI" id="CHEBI:58017"/>
    </ligand>
</feature>
<feature type="binding site" evidence="1">
    <location>
        <begin position="130"/>
        <end position="138"/>
    </location>
    <ligand>
        <name>5-phospho-alpha-D-ribose 1-diphosphate</name>
        <dbReference type="ChEBI" id="CHEBI:58017"/>
    </ligand>
</feature>
<feature type="binding site" evidence="1">
    <location>
        <position position="193"/>
    </location>
    <ligand>
        <name>uracil</name>
        <dbReference type="ChEBI" id="CHEBI:17568"/>
    </ligand>
</feature>
<feature type="binding site" evidence="1">
    <location>
        <begin position="198"/>
        <end position="200"/>
    </location>
    <ligand>
        <name>uracil</name>
        <dbReference type="ChEBI" id="CHEBI:17568"/>
    </ligand>
</feature>
<feature type="binding site" evidence="1">
    <location>
        <position position="199"/>
    </location>
    <ligand>
        <name>5-phospho-alpha-D-ribose 1-diphosphate</name>
        <dbReference type="ChEBI" id="CHEBI:58017"/>
    </ligand>
</feature>